<proteinExistence type="inferred from homology"/>
<protein>
    <recommendedName>
        <fullName evidence="1">Peptide deformylase 2</fullName>
        <shortName evidence="1">PDF 2</shortName>
        <ecNumber evidence="1">3.5.1.88</ecNumber>
    </recommendedName>
    <alternativeName>
        <fullName evidence="1">Polypeptide deformylase 2</fullName>
    </alternativeName>
</protein>
<comment type="function">
    <text evidence="1">Removes the formyl group from the N-terminal Met of newly synthesized proteins. Requires at least a dipeptide for an efficient rate of reaction. N-terminal L-methionine is a prerequisite for activity but the enzyme has broad specificity at other positions.</text>
</comment>
<comment type="catalytic activity">
    <reaction evidence="1">
        <text>N-terminal N-formyl-L-methionyl-[peptide] + H2O = N-terminal L-methionyl-[peptide] + formate</text>
        <dbReference type="Rhea" id="RHEA:24420"/>
        <dbReference type="Rhea" id="RHEA-COMP:10639"/>
        <dbReference type="Rhea" id="RHEA-COMP:10640"/>
        <dbReference type="ChEBI" id="CHEBI:15377"/>
        <dbReference type="ChEBI" id="CHEBI:15740"/>
        <dbReference type="ChEBI" id="CHEBI:49298"/>
        <dbReference type="ChEBI" id="CHEBI:64731"/>
        <dbReference type="EC" id="3.5.1.88"/>
    </reaction>
</comment>
<comment type="cofactor">
    <cofactor evidence="1">
        <name>Fe(2+)</name>
        <dbReference type="ChEBI" id="CHEBI:29033"/>
    </cofactor>
    <text evidence="1">Binds 1 Fe(2+) ion.</text>
</comment>
<comment type="similarity">
    <text evidence="1">Belongs to the polypeptide deformylase family.</text>
</comment>
<reference key="1">
    <citation type="journal article" date="2003" name="Lancet">
        <title>Genome sequence of Vibrio parahaemolyticus: a pathogenic mechanism distinct from that of V. cholerae.</title>
        <authorList>
            <person name="Makino K."/>
            <person name="Oshima K."/>
            <person name="Kurokawa K."/>
            <person name="Yokoyama K."/>
            <person name="Uda T."/>
            <person name="Tagomori K."/>
            <person name="Iijima Y."/>
            <person name="Najima M."/>
            <person name="Nakano M."/>
            <person name="Yamashita A."/>
            <person name="Kubota Y."/>
            <person name="Kimura S."/>
            <person name="Yasunaga T."/>
            <person name="Honda T."/>
            <person name="Shinagawa H."/>
            <person name="Hattori M."/>
            <person name="Iida T."/>
        </authorList>
    </citation>
    <scope>NUCLEOTIDE SEQUENCE [LARGE SCALE GENOMIC DNA]</scope>
    <source>
        <strain>RIMD 2210633</strain>
    </source>
</reference>
<organism>
    <name type="scientific">Vibrio parahaemolyticus serotype O3:K6 (strain RIMD 2210633)</name>
    <dbReference type="NCBI Taxonomy" id="223926"/>
    <lineage>
        <taxon>Bacteria</taxon>
        <taxon>Pseudomonadati</taxon>
        <taxon>Pseudomonadota</taxon>
        <taxon>Gammaproteobacteria</taxon>
        <taxon>Vibrionales</taxon>
        <taxon>Vibrionaceae</taxon>
        <taxon>Vibrio</taxon>
    </lineage>
</organism>
<gene>
    <name evidence="1" type="primary">def2</name>
    <name type="ordered locus">VPA0784</name>
</gene>
<keyword id="KW-0378">Hydrolase</keyword>
<keyword id="KW-0408">Iron</keyword>
<keyword id="KW-0479">Metal-binding</keyword>
<keyword id="KW-0648">Protein biosynthesis</keyword>
<feature type="chain" id="PRO_0000082876" description="Peptide deformylase 2">
    <location>
        <begin position="1"/>
        <end position="168"/>
    </location>
</feature>
<feature type="active site" evidence="1">
    <location>
        <position position="134"/>
    </location>
</feature>
<feature type="binding site" evidence="1">
    <location>
        <position position="91"/>
    </location>
    <ligand>
        <name>Fe cation</name>
        <dbReference type="ChEBI" id="CHEBI:24875"/>
    </ligand>
</feature>
<feature type="binding site" evidence="1">
    <location>
        <position position="133"/>
    </location>
    <ligand>
        <name>Fe cation</name>
        <dbReference type="ChEBI" id="CHEBI:24875"/>
    </ligand>
</feature>
<feature type="binding site" evidence="1">
    <location>
        <position position="137"/>
    </location>
    <ligand>
        <name>Fe cation</name>
        <dbReference type="ChEBI" id="CHEBI:24875"/>
    </ligand>
</feature>
<sequence>MAVLEILSIPDPRLKVKAEKVTDVSTIQTLIDDMLETLYATGNGIGLASTQVGRKEAVVVIDISDERNDPLILVNPEVVSGENKALGQEGCLSVPEYYADVERYTSVVVSALDRDGNPITIESDEFLAIVMQHEIDHLSGNLFIDYLSPLKQKMAMKKVKKYVKAQAK</sequence>
<dbReference type="EC" id="3.5.1.88" evidence="1"/>
<dbReference type="EMBL" id="BA000032">
    <property type="protein sequence ID" value="BAC62127.1"/>
    <property type="molecule type" value="Genomic_DNA"/>
</dbReference>
<dbReference type="RefSeq" id="NP_800294.1">
    <property type="nucleotide sequence ID" value="NC_004605.1"/>
</dbReference>
<dbReference type="SMR" id="Q87I22"/>
<dbReference type="GeneID" id="1191473"/>
<dbReference type="KEGG" id="vpa:VPA0784"/>
<dbReference type="PATRIC" id="fig|223926.6.peg.3717"/>
<dbReference type="eggNOG" id="COG0242">
    <property type="taxonomic scope" value="Bacteria"/>
</dbReference>
<dbReference type="HOGENOM" id="CLU_061901_2_1_6"/>
<dbReference type="Proteomes" id="UP000002493">
    <property type="component" value="Chromosome 2"/>
</dbReference>
<dbReference type="GO" id="GO:0046872">
    <property type="term" value="F:metal ion binding"/>
    <property type="evidence" value="ECO:0007669"/>
    <property type="project" value="UniProtKB-KW"/>
</dbReference>
<dbReference type="GO" id="GO:0042586">
    <property type="term" value="F:peptide deformylase activity"/>
    <property type="evidence" value="ECO:0007669"/>
    <property type="project" value="UniProtKB-UniRule"/>
</dbReference>
<dbReference type="GO" id="GO:0043686">
    <property type="term" value="P:co-translational protein modification"/>
    <property type="evidence" value="ECO:0007669"/>
    <property type="project" value="TreeGrafter"/>
</dbReference>
<dbReference type="GO" id="GO:0006412">
    <property type="term" value="P:translation"/>
    <property type="evidence" value="ECO:0007669"/>
    <property type="project" value="UniProtKB-UniRule"/>
</dbReference>
<dbReference type="CDD" id="cd00487">
    <property type="entry name" value="Pep_deformylase"/>
    <property type="match status" value="1"/>
</dbReference>
<dbReference type="Gene3D" id="3.90.45.10">
    <property type="entry name" value="Peptide deformylase"/>
    <property type="match status" value="1"/>
</dbReference>
<dbReference type="HAMAP" id="MF_00163">
    <property type="entry name" value="Pep_deformylase"/>
    <property type="match status" value="1"/>
</dbReference>
<dbReference type="InterPro" id="IPR023635">
    <property type="entry name" value="Peptide_deformylase"/>
</dbReference>
<dbReference type="InterPro" id="IPR036821">
    <property type="entry name" value="Peptide_deformylase_sf"/>
</dbReference>
<dbReference type="NCBIfam" id="TIGR00079">
    <property type="entry name" value="pept_deformyl"/>
    <property type="match status" value="1"/>
</dbReference>
<dbReference type="NCBIfam" id="NF001159">
    <property type="entry name" value="PRK00150.1-3"/>
    <property type="match status" value="1"/>
</dbReference>
<dbReference type="PANTHER" id="PTHR10458">
    <property type="entry name" value="PEPTIDE DEFORMYLASE"/>
    <property type="match status" value="1"/>
</dbReference>
<dbReference type="PANTHER" id="PTHR10458:SF22">
    <property type="entry name" value="PEPTIDE DEFORMYLASE"/>
    <property type="match status" value="1"/>
</dbReference>
<dbReference type="Pfam" id="PF01327">
    <property type="entry name" value="Pep_deformylase"/>
    <property type="match status" value="1"/>
</dbReference>
<dbReference type="PIRSF" id="PIRSF004749">
    <property type="entry name" value="Pep_def"/>
    <property type="match status" value="1"/>
</dbReference>
<dbReference type="PRINTS" id="PR01576">
    <property type="entry name" value="PDEFORMYLASE"/>
</dbReference>
<dbReference type="SUPFAM" id="SSF56420">
    <property type="entry name" value="Peptide deformylase"/>
    <property type="match status" value="1"/>
</dbReference>
<accession>Q87I22</accession>
<name>DEF2_VIBPA</name>
<evidence type="ECO:0000255" key="1">
    <source>
        <dbReference type="HAMAP-Rule" id="MF_00163"/>
    </source>
</evidence>